<comment type="function">
    <text evidence="1">Forms oxaloacetate, a four-carbon dicarboxylic acid source for the tricarboxylic acid cycle.</text>
</comment>
<comment type="catalytic activity">
    <reaction evidence="1">
        <text>oxaloacetate + phosphate = phosphoenolpyruvate + hydrogencarbonate</text>
        <dbReference type="Rhea" id="RHEA:28370"/>
        <dbReference type="ChEBI" id="CHEBI:16452"/>
        <dbReference type="ChEBI" id="CHEBI:17544"/>
        <dbReference type="ChEBI" id="CHEBI:43474"/>
        <dbReference type="ChEBI" id="CHEBI:58702"/>
        <dbReference type="EC" id="4.1.1.31"/>
    </reaction>
</comment>
<comment type="cofactor">
    <cofactor evidence="1">
        <name>Mg(2+)</name>
        <dbReference type="ChEBI" id="CHEBI:18420"/>
    </cofactor>
</comment>
<comment type="similarity">
    <text evidence="1">Belongs to the PEPCase type 1 family.</text>
</comment>
<name>CAPP_NOCFA</name>
<evidence type="ECO:0000255" key="1">
    <source>
        <dbReference type="HAMAP-Rule" id="MF_00595"/>
    </source>
</evidence>
<keyword id="KW-0120">Carbon dioxide fixation</keyword>
<keyword id="KW-0456">Lyase</keyword>
<keyword id="KW-0460">Magnesium</keyword>
<keyword id="KW-1185">Reference proteome</keyword>
<sequence length="923" mass="100839">MTEPRIETEQDATRPLRDDIRFLGGVLGDTIRDHEGPEVFDLIERVRIEAFRVRREEVGRSAVAEMLRGVDIAVALPLIRAFSYFVLLANLAEDIQRDRRRAVHVAAGEPPQDSSLAATYRKLDAAALDAAAVADLLSDALVSPVITAHPTETRRRTVFDAQTRITELMRARQRATDPAERAALESRIRRQVLSLWRTALIRLARLRIQDEIAVGLRYYELTLFDVIPAINAEVRAALRARWPGADLLARPILRPGSWIGGDRDGNPYVTAEVVRHAATQAAGVALRRYLAELVELAKTLSLSARLVPVTPRVAELAAAGYPDPATHGDEPYRRALHHIRVRLSATADRVLDAPVPEAVAEPDAQPYAGPREFLDDLDAIDASLRASGDGLLADDRLAALRHAVETFGFHLQGLDMRQNSEVHEQVVAELLAWAGVHPAYGDLPEDARVELLAAELRTRRPLLGPHARLSEQAAKEVGIVRAAKQVVDTFGPEAVPNYIISMCTSVSDMLEAALLLKEGGLLDPGAPEGSPSCTVNIVPLFETIEDLGAGAATLAAALEVPVYRELVAAAGMRQEVMLGYSDSNKDGGYLAANWALYRAELDLVEVARKTGIRLRLFHGRGGTVGRGGGRSYDAILAQPAGAVRGALRLTEQGEVIAAKYAEPGAAHRNLESLIAGTLESTLLDVEGLGADAEPAYELMDELAALARAAYARLVHETPGFVEYFRQSTPVAEVGDLNIGSRPASRKPTNSVSDLRAIPWVMAWSQARVMLPGWYGTGAALEEWVGGDPGRLARLTDLYRRWPFFRTVLSNLAQVMAKSDLDIAARYAELVDDAALRDQIFGMIREEHARTLRMHAAITGHDQLLADNRSLAESIHNRFPYLEPLNQMQVELLRRLRSGDDSELVKRGILLTMNGLATALRNSG</sequence>
<reference key="1">
    <citation type="journal article" date="2004" name="Proc. Natl. Acad. Sci. U.S.A.">
        <title>The complete genomic sequence of Nocardia farcinica IFM 10152.</title>
        <authorList>
            <person name="Ishikawa J."/>
            <person name="Yamashita A."/>
            <person name="Mikami Y."/>
            <person name="Hoshino Y."/>
            <person name="Kurita H."/>
            <person name="Hotta K."/>
            <person name="Shiba T."/>
            <person name="Hattori M."/>
        </authorList>
    </citation>
    <scope>NUCLEOTIDE SEQUENCE [LARGE SCALE GENOMIC DNA]</scope>
    <source>
        <strain>IFM 10152</strain>
    </source>
</reference>
<gene>
    <name evidence="1" type="primary">ppc</name>
    <name type="ordered locus">NFA_19280</name>
</gene>
<accession>Q5YYG7</accession>
<dbReference type="EC" id="4.1.1.31" evidence="1"/>
<dbReference type="EMBL" id="AP006618">
    <property type="protein sequence ID" value="BAD56774.1"/>
    <property type="molecule type" value="Genomic_DNA"/>
</dbReference>
<dbReference type="RefSeq" id="WP_011208459.1">
    <property type="nucleotide sequence ID" value="NC_006361.1"/>
</dbReference>
<dbReference type="SMR" id="Q5YYG7"/>
<dbReference type="STRING" id="247156.NFA_19280"/>
<dbReference type="GeneID" id="61132710"/>
<dbReference type="KEGG" id="nfa:NFA_19280"/>
<dbReference type="eggNOG" id="COG2352">
    <property type="taxonomic scope" value="Bacteria"/>
</dbReference>
<dbReference type="HOGENOM" id="CLU_006557_2_0_11"/>
<dbReference type="OrthoDB" id="9768133at2"/>
<dbReference type="Proteomes" id="UP000006820">
    <property type="component" value="Chromosome"/>
</dbReference>
<dbReference type="GO" id="GO:0005829">
    <property type="term" value="C:cytosol"/>
    <property type="evidence" value="ECO:0007669"/>
    <property type="project" value="TreeGrafter"/>
</dbReference>
<dbReference type="GO" id="GO:0000287">
    <property type="term" value="F:magnesium ion binding"/>
    <property type="evidence" value="ECO:0007669"/>
    <property type="project" value="UniProtKB-UniRule"/>
</dbReference>
<dbReference type="GO" id="GO:0008964">
    <property type="term" value="F:phosphoenolpyruvate carboxylase activity"/>
    <property type="evidence" value="ECO:0007669"/>
    <property type="project" value="UniProtKB-UniRule"/>
</dbReference>
<dbReference type="GO" id="GO:0015977">
    <property type="term" value="P:carbon fixation"/>
    <property type="evidence" value="ECO:0007669"/>
    <property type="project" value="UniProtKB-UniRule"/>
</dbReference>
<dbReference type="GO" id="GO:0006107">
    <property type="term" value="P:oxaloacetate metabolic process"/>
    <property type="evidence" value="ECO:0007669"/>
    <property type="project" value="UniProtKB-UniRule"/>
</dbReference>
<dbReference type="GO" id="GO:0006099">
    <property type="term" value="P:tricarboxylic acid cycle"/>
    <property type="evidence" value="ECO:0007669"/>
    <property type="project" value="InterPro"/>
</dbReference>
<dbReference type="Gene3D" id="1.20.1440.90">
    <property type="entry name" value="Phosphoenolpyruvate/pyruvate domain"/>
    <property type="match status" value="1"/>
</dbReference>
<dbReference type="HAMAP" id="MF_00595">
    <property type="entry name" value="PEPcase_type1"/>
    <property type="match status" value="1"/>
</dbReference>
<dbReference type="InterPro" id="IPR021135">
    <property type="entry name" value="PEP_COase"/>
</dbReference>
<dbReference type="InterPro" id="IPR022805">
    <property type="entry name" value="PEP_COase_bac/pln-type"/>
</dbReference>
<dbReference type="InterPro" id="IPR018129">
    <property type="entry name" value="PEP_COase_Lys_AS"/>
</dbReference>
<dbReference type="InterPro" id="IPR033129">
    <property type="entry name" value="PEPCASE_His_AS"/>
</dbReference>
<dbReference type="InterPro" id="IPR015813">
    <property type="entry name" value="Pyrv/PenolPyrv_kinase-like_dom"/>
</dbReference>
<dbReference type="NCBIfam" id="NF000584">
    <property type="entry name" value="PRK00009.1"/>
    <property type="match status" value="1"/>
</dbReference>
<dbReference type="PANTHER" id="PTHR30523">
    <property type="entry name" value="PHOSPHOENOLPYRUVATE CARBOXYLASE"/>
    <property type="match status" value="1"/>
</dbReference>
<dbReference type="PANTHER" id="PTHR30523:SF6">
    <property type="entry name" value="PHOSPHOENOLPYRUVATE CARBOXYLASE"/>
    <property type="match status" value="1"/>
</dbReference>
<dbReference type="Pfam" id="PF00311">
    <property type="entry name" value="PEPcase"/>
    <property type="match status" value="1"/>
</dbReference>
<dbReference type="PRINTS" id="PR00150">
    <property type="entry name" value="PEPCARBXLASE"/>
</dbReference>
<dbReference type="SUPFAM" id="SSF51621">
    <property type="entry name" value="Phosphoenolpyruvate/pyruvate domain"/>
    <property type="match status" value="1"/>
</dbReference>
<dbReference type="PROSITE" id="PS00781">
    <property type="entry name" value="PEPCASE_1"/>
    <property type="match status" value="1"/>
</dbReference>
<dbReference type="PROSITE" id="PS00393">
    <property type="entry name" value="PEPCASE_2"/>
    <property type="match status" value="1"/>
</dbReference>
<protein>
    <recommendedName>
        <fullName evidence="1">Phosphoenolpyruvate carboxylase</fullName>
        <shortName evidence="1">PEPC</shortName>
        <shortName evidence="1">PEPCase</shortName>
        <ecNumber evidence="1">4.1.1.31</ecNumber>
    </recommendedName>
</protein>
<feature type="chain" id="PRO_0000166606" description="Phosphoenolpyruvate carboxylase">
    <location>
        <begin position="1"/>
        <end position="923"/>
    </location>
</feature>
<feature type="active site" evidence="1">
    <location>
        <position position="149"/>
    </location>
</feature>
<feature type="active site" evidence="1">
    <location>
        <position position="585"/>
    </location>
</feature>
<organism>
    <name type="scientific">Nocardia farcinica (strain IFM 10152)</name>
    <dbReference type="NCBI Taxonomy" id="247156"/>
    <lineage>
        <taxon>Bacteria</taxon>
        <taxon>Bacillati</taxon>
        <taxon>Actinomycetota</taxon>
        <taxon>Actinomycetes</taxon>
        <taxon>Mycobacteriales</taxon>
        <taxon>Nocardiaceae</taxon>
        <taxon>Nocardia</taxon>
    </lineage>
</organism>
<proteinExistence type="inferred from homology"/>